<evidence type="ECO:0000255" key="1">
    <source>
        <dbReference type="HAMAP-Rule" id="MF_01916"/>
    </source>
</evidence>
<accession>Q6G7M2</accession>
<sequence length="494" mass="56518">MIELLSIALKHSNIILNSIFIGAFILNLLFAFTIIFMERRSANSIWAWLLVLVFLPLFGFILYLLLGRQIQRDQIFKIDKEDKKGLELIVDEQLAALKNENFSNSNYQIVKFKEMIQMLLYNNAAFLTTDNDLKIYTDGQEKFDDLIQDIRNATDYIHFQYYIIQNDELGRTILNELGKKAEQGVEVKILYDDMGSRGLRKKGLRPFRNKGGHAEAFFPSKLPLINLRMNNRNHRKIVVIDGQIGYVGGFNVGDEYLGKSKKFGYWRDTHLRIVGDAVNALQLRFILDWNSQATRDHISYDDRYFPDVNSGGTIGVQIASSGPDEEWEQIKYGYLKMISSAKKSIYIQSPYFIPDQAFLDSIKIAALGGVDVNIMIPNKPDHPFVFWATLKNAASLLDAGVKVFHYDNGFLHSKTLVIDDEIASVGTANMDHRSFTLNFEVNAFIYDQQIAKKLKQAFIDDLAVSSELTKARYAKRSLWIKFKEGISQLLSPIL</sequence>
<organism>
    <name type="scientific">Staphylococcus aureus (strain MSSA476)</name>
    <dbReference type="NCBI Taxonomy" id="282459"/>
    <lineage>
        <taxon>Bacteria</taxon>
        <taxon>Bacillati</taxon>
        <taxon>Bacillota</taxon>
        <taxon>Bacilli</taxon>
        <taxon>Bacillales</taxon>
        <taxon>Staphylococcaceae</taxon>
        <taxon>Staphylococcus</taxon>
    </lineage>
</organism>
<name>CLS_STAAS</name>
<dbReference type="EC" id="2.7.8.-" evidence="1"/>
<dbReference type="EMBL" id="BX571857">
    <property type="protein sequence ID" value="CAG43799.1"/>
    <property type="molecule type" value="Genomic_DNA"/>
</dbReference>
<dbReference type="RefSeq" id="WP_000571549.1">
    <property type="nucleotide sequence ID" value="NC_002953.3"/>
</dbReference>
<dbReference type="SMR" id="Q6G7M2"/>
<dbReference type="KEGG" id="sas:SAS1992"/>
<dbReference type="HOGENOM" id="CLU_038053_1_1_9"/>
<dbReference type="GO" id="GO:0005886">
    <property type="term" value="C:plasma membrane"/>
    <property type="evidence" value="ECO:0007669"/>
    <property type="project" value="UniProtKB-SubCell"/>
</dbReference>
<dbReference type="GO" id="GO:0008808">
    <property type="term" value="F:cardiolipin synthase activity"/>
    <property type="evidence" value="ECO:0007669"/>
    <property type="project" value="InterPro"/>
</dbReference>
<dbReference type="GO" id="GO:0032049">
    <property type="term" value="P:cardiolipin biosynthetic process"/>
    <property type="evidence" value="ECO:0007669"/>
    <property type="project" value="InterPro"/>
</dbReference>
<dbReference type="CDD" id="cd09110">
    <property type="entry name" value="PLDc_CLS_1"/>
    <property type="match status" value="1"/>
</dbReference>
<dbReference type="CDD" id="cd09112">
    <property type="entry name" value="PLDc_CLS_2"/>
    <property type="match status" value="1"/>
</dbReference>
<dbReference type="FunFam" id="3.30.870.10:FF:000014">
    <property type="entry name" value="Cardiolipin synthase"/>
    <property type="match status" value="1"/>
</dbReference>
<dbReference type="FunFam" id="3.30.870.10:FF:000021">
    <property type="entry name" value="Cardiolipin synthase"/>
    <property type="match status" value="1"/>
</dbReference>
<dbReference type="Gene3D" id="3.30.870.10">
    <property type="entry name" value="Endonuclease Chain A"/>
    <property type="match status" value="2"/>
</dbReference>
<dbReference type="HAMAP" id="MF_01916">
    <property type="entry name" value="Cardiolipin_synth_Cls"/>
    <property type="match status" value="1"/>
</dbReference>
<dbReference type="InterPro" id="IPR030874">
    <property type="entry name" value="Cardiolipin_synth_Firmi"/>
</dbReference>
<dbReference type="InterPro" id="IPR022924">
    <property type="entry name" value="Cardiolipin_synthase"/>
</dbReference>
<dbReference type="InterPro" id="IPR027379">
    <property type="entry name" value="CLS_N"/>
</dbReference>
<dbReference type="InterPro" id="IPR025202">
    <property type="entry name" value="PLD-like_dom"/>
</dbReference>
<dbReference type="InterPro" id="IPR001736">
    <property type="entry name" value="PLipase_D/transphosphatidylase"/>
</dbReference>
<dbReference type="NCBIfam" id="TIGR04265">
    <property type="entry name" value="bac_cardiolipin"/>
    <property type="match status" value="1"/>
</dbReference>
<dbReference type="PANTHER" id="PTHR21248">
    <property type="entry name" value="CARDIOLIPIN SYNTHASE"/>
    <property type="match status" value="1"/>
</dbReference>
<dbReference type="PANTHER" id="PTHR21248:SF22">
    <property type="entry name" value="PHOSPHOLIPASE D"/>
    <property type="match status" value="1"/>
</dbReference>
<dbReference type="Pfam" id="PF13091">
    <property type="entry name" value="PLDc_2"/>
    <property type="match status" value="2"/>
</dbReference>
<dbReference type="Pfam" id="PF13396">
    <property type="entry name" value="PLDc_N"/>
    <property type="match status" value="1"/>
</dbReference>
<dbReference type="SMART" id="SM00155">
    <property type="entry name" value="PLDc"/>
    <property type="match status" value="2"/>
</dbReference>
<dbReference type="SUPFAM" id="SSF56024">
    <property type="entry name" value="Phospholipase D/nuclease"/>
    <property type="match status" value="2"/>
</dbReference>
<dbReference type="PROSITE" id="PS50035">
    <property type="entry name" value="PLD"/>
    <property type="match status" value="2"/>
</dbReference>
<keyword id="KW-1003">Cell membrane</keyword>
<keyword id="KW-0444">Lipid biosynthesis</keyword>
<keyword id="KW-0443">Lipid metabolism</keyword>
<keyword id="KW-0472">Membrane</keyword>
<keyword id="KW-0594">Phospholipid biosynthesis</keyword>
<keyword id="KW-1208">Phospholipid metabolism</keyword>
<keyword id="KW-0677">Repeat</keyword>
<keyword id="KW-0808">Transferase</keyword>
<keyword id="KW-0812">Transmembrane</keyword>
<keyword id="KW-1133">Transmembrane helix</keyword>
<protein>
    <recommendedName>
        <fullName evidence="1">Cardiolipin synthase</fullName>
        <shortName evidence="1">CL synthase</shortName>
        <ecNumber evidence="1">2.7.8.-</ecNumber>
    </recommendedName>
</protein>
<gene>
    <name type="primary">cls</name>
    <name type="ordered locus">SAS1992</name>
</gene>
<comment type="function">
    <text evidence="1">Catalyzes the reversible phosphatidyl group transfer from one phosphatidylglycerol molecule to another to form cardiolipin (CL) (diphosphatidylglycerol) and glycerol.</text>
</comment>
<comment type="catalytic activity">
    <reaction evidence="1">
        <text>2 a 1,2-diacyl-sn-glycero-3-phospho-(1'-sn-glycerol) = a cardiolipin + glycerol</text>
        <dbReference type="Rhea" id="RHEA:31451"/>
        <dbReference type="ChEBI" id="CHEBI:17754"/>
        <dbReference type="ChEBI" id="CHEBI:62237"/>
        <dbReference type="ChEBI" id="CHEBI:64716"/>
    </reaction>
</comment>
<comment type="subcellular location">
    <subcellularLocation>
        <location evidence="1">Cell membrane</location>
        <topology evidence="1">Multi-pass membrane protein</topology>
    </subcellularLocation>
</comment>
<comment type="similarity">
    <text evidence="1">Belongs to the phospholipase D family. Cardiolipin synthase subfamily.</text>
</comment>
<proteinExistence type="inferred from homology"/>
<reference key="1">
    <citation type="journal article" date="2004" name="Proc. Natl. Acad. Sci. U.S.A.">
        <title>Complete genomes of two clinical Staphylococcus aureus strains: evidence for the rapid evolution of virulence and drug resistance.</title>
        <authorList>
            <person name="Holden M.T.G."/>
            <person name="Feil E.J."/>
            <person name="Lindsay J.A."/>
            <person name="Peacock S.J."/>
            <person name="Day N.P.J."/>
            <person name="Enright M.C."/>
            <person name="Foster T.J."/>
            <person name="Moore C.E."/>
            <person name="Hurst L."/>
            <person name="Atkin R."/>
            <person name="Barron A."/>
            <person name="Bason N."/>
            <person name="Bentley S.D."/>
            <person name="Chillingworth C."/>
            <person name="Chillingworth T."/>
            <person name="Churcher C."/>
            <person name="Clark L."/>
            <person name="Corton C."/>
            <person name="Cronin A."/>
            <person name="Doggett J."/>
            <person name="Dowd L."/>
            <person name="Feltwell T."/>
            <person name="Hance Z."/>
            <person name="Harris B."/>
            <person name="Hauser H."/>
            <person name="Holroyd S."/>
            <person name="Jagels K."/>
            <person name="James K.D."/>
            <person name="Lennard N."/>
            <person name="Line A."/>
            <person name="Mayes R."/>
            <person name="Moule S."/>
            <person name="Mungall K."/>
            <person name="Ormond D."/>
            <person name="Quail M.A."/>
            <person name="Rabbinowitsch E."/>
            <person name="Rutherford K.M."/>
            <person name="Sanders M."/>
            <person name="Sharp S."/>
            <person name="Simmonds M."/>
            <person name="Stevens K."/>
            <person name="Whitehead S."/>
            <person name="Barrell B.G."/>
            <person name="Spratt B.G."/>
            <person name="Parkhill J."/>
        </authorList>
    </citation>
    <scope>NUCLEOTIDE SEQUENCE [LARGE SCALE GENOMIC DNA]</scope>
    <source>
        <strain>MSSA476</strain>
    </source>
</reference>
<feature type="chain" id="PRO_0000201273" description="Cardiolipin synthase">
    <location>
        <begin position="1"/>
        <end position="494"/>
    </location>
</feature>
<feature type="transmembrane region" description="Helical" evidence="1">
    <location>
        <begin position="14"/>
        <end position="34"/>
    </location>
</feature>
<feature type="transmembrane region" description="Helical" evidence="1">
    <location>
        <begin position="45"/>
        <end position="65"/>
    </location>
</feature>
<feature type="domain" description="PLD phosphodiesterase 1" evidence="1">
    <location>
        <begin position="229"/>
        <end position="256"/>
    </location>
</feature>
<feature type="domain" description="PLD phosphodiesterase 2" evidence="1">
    <location>
        <begin position="407"/>
        <end position="434"/>
    </location>
</feature>
<feature type="active site" evidence="1">
    <location>
        <position position="234"/>
    </location>
</feature>
<feature type="active site" evidence="1">
    <location>
        <position position="236"/>
    </location>
</feature>
<feature type="active site" evidence="1">
    <location>
        <position position="241"/>
    </location>
</feature>
<feature type="active site" evidence="1">
    <location>
        <position position="412"/>
    </location>
</feature>
<feature type="active site" evidence="1">
    <location>
        <position position="414"/>
    </location>
</feature>
<feature type="active site" evidence="1">
    <location>
        <position position="419"/>
    </location>
</feature>